<sequence>MERPELPIGLPDDIEEKKAAARNWFEGLRDTICASFEAIEDDLEGPLSDQEPGRFVAKDWSRENGAGGGGRMSMMEGRVFEKVGVHTSTVYGEFAPDFRAQIPGAKDDPRFWASGISLIAHPVNPNVPAVHMNTRMVVTTSRWFGGGADLTPVLSRRRTQEDEDSQLFHKAMEIACRNHAVADYDAYKTWCDEYFFLKHRNEARGIGGIFYDWLHSSEEAGGWDADFAFTRDVGRAFAMVYPKIVRSNFNKLWTEADRDEQLIRRGRYVEFNLLYDRGTIFGLKTGGNVESILSSLPPVVRWP</sequence>
<protein>
    <recommendedName>
        <fullName evidence="1">Oxygen-dependent coproporphyrinogen-III oxidase</fullName>
        <shortName evidence="1">CPO</shortName>
        <shortName evidence="1">Coprogen oxidase</shortName>
        <shortName evidence="1">Coproporphyrinogenase</shortName>
        <ecNumber evidence="1">1.3.3.3</ecNumber>
    </recommendedName>
</protein>
<name>HEM6_RHIJ3</name>
<comment type="function">
    <text evidence="1">Involved in the heme biosynthesis. Catalyzes the aerobic oxidative decarboxylation of propionate groups of rings A and B of coproporphyrinogen-III to yield the vinyl groups in protoporphyrinogen-IX.</text>
</comment>
<comment type="catalytic activity">
    <reaction evidence="1">
        <text>coproporphyrinogen III + O2 + 2 H(+) = protoporphyrinogen IX + 2 CO2 + 2 H2O</text>
        <dbReference type="Rhea" id="RHEA:18257"/>
        <dbReference type="ChEBI" id="CHEBI:15377"/>
        <dbReference type="ChEBI" id="CHEBI:15378"/>
        <dbReference type="ChEBI" id="CHEBI:15379"/>
        <dbReference type="ChEBI" id="CHEBI:16526"/>
        <dbReference type="ChEBI" id="CHEBI:57307"/>
        <dbReference type="ChEBI" id="CHEBI:57309"/>
        <dbReference type="EC" id="1.3.3.3"/>
    </reaction>
</comment>
<comment type="cofactor">
    <cofactor evidence="1">
        <name>a divalent metal cation</name>
        <dbReference type="ChEBI" id="CHEBI:60240"/>
    </cofactor>
</comment>
<comment type="pathway">
    <text evidence="1">Porphyrin-containing compound metabolism; protoporphyrin-IX biosynthesis; protoporphyrinogen-IX from coproporphyrinogen-III (O2 route): step 1/1.</text>
</comment>
<comment type="subunit">
    <text evidence="1">Homodimer.</text>
</comment>
<comment type="subcellular location">
    <subcellularLocation>
        <location evidence="1">Cytoplasm</location>
    </subcellularLocation>
</comment>
<comment type="similarity">
    <text evidence="1">Belongs to the aerobic coproporphyrinogen-III oxidase family.</text>
</comment>
<dbReference type="EC" id="1.3.3.3" evidence="1"/>
<dbReference type="EMBL" id="AM236080">
    <property type="protein sequence ID" value="CAK08982.1"/>
    <property type="molecule type" value="Genomic_DNA"/>
</dbReference>
<dbReference type="RefSeq" id="WP_011652970.1">
    <property type="nucleotide sequence ID" value="NC_008380.1"/>
</dbReference>
<dbReference type="SMR" id="Q1MDJ5"/>
<dbReference type="EnsemblBacteria" id="CAK08982">
    <property type="protein sequence ID" value="CAK08982"/>
    <property type="gene ID" value="RL3494"/>
</dbReference>
<dbReference type="KEGG" id="rle:RL3494"/>
<dbReference type="eggNOG" id="COG0408">
    <property type="taxonomic scope" value="Bacteria"/>
</dbReference>
<dbReference type="HOGENOM" id="CLU_026169_0_1_5"/>
<dbReference type="UniPathway" id="UPA00251">
    <property type="reaction ID" value="UER00322"/>
</dbReference>
<dbReference type="Proteomes" id="UP000006575">
    <property type="component" value="Chromosome"/>
</dbReference>
<dbReference type="GO" id="GO:0005737">
    <property type="term" value="C:cytoplasm"/>
    <property type="evidence" value="ECO:0007669"/>
    <property type="project" value="UniProtKB-SubCell"/>
</dbReference>
<dbReference type="GO" id="GO:0004109">
    <property type="term" value="F:coproporphyrinogen oxidase activity"/>
    <property type="evidence" value="ECO:0007669"/>
    <property type="project" value="UniProtKB-UniRule"/>
</dbReference>
<dbReference type="GO" id="GO:0046872">
    <property type="term" value="F:metal ion binding"/>
    <property type="evidence" value="ECO:0007669"/>
    <property type="project" value="UniProtKB-KW"/>
</dbReference>
<dbReference type="GO" id="GO:0042803">
    <property type="term" value="F:protein homodimerization activity"/>
    <property type="evidence" value="ECO:0000250"/>
    <property type="project" value="UniProtKB"/>
</dbReference>
<dbReference type="GO" id="GO:0006782">
    <property type="term" value="P:protoporphyrinogen IX biosynthetic process"/>
    <property type="evidence" value="ECO:0007669"/>
    <property type="project" value="UniProtKB-UniRule"/>
</dbReference>
<dbReference type="FunFam" id="3.40.1500.10:FF:000005">
    <property type="entry name" value="Oxygen-dependent coproporphyrinogen-III oxidase"/>
    <property type="match status" value="1"/>
</dbReference>
<dbReference type="Gene3D" id="3.40.1500.10">
    <property type="entry name" value="Coproporphyrinogen III oxidase, aerobic"/>
    <property type="match status" value="1"/>
</dbReference>
<dbReference type="HAMAP" id="MF_00333">
    <property type="entry name" value="Coprogen_oxidas"/>
    <property type="match status" value="1"/>
</dbReference>
<dbReference type="InterPro" id="IPR001260">
    <property type="entry name" value="Coprogen_oxidase_aer"/>
</dbReference>
<dbReference type="InterPro" id="IPR036406">
    <property type="entry name" value="Coprogen_oxidase_aer_sf"/>
</dbReference>
<dbReference type="InterPro" id="IPR018375">
    <property type="entry name" value="Coprogen_oxidase_CS"/>
</dbReference>
<dbReference type="NCBIfam" id="NF003727">
    <property type="entry name" value="PRK05330.1"/>
    <property type="match status" value="1"/>
</dbReference>
<dbReference type="PANTHER" id="PTHR10755">
    <property type="entry name" value="COPROPORPHYRINOGEN III OXIDASE, MITOCHONDRIAL"/>
    <property type="match status" value="1"/>
</dbReference>
<dbReference type="PANTHER" id="PTHR10755:SF0">
    <property type="entry name" value="OXYGEN-DEPENDENT COPROPORPHYRINOGEN-III OXIDASE, MITOCHONDRIAL"/>
    <property type="match status" value="1"/>
</dbReference>
<dbReference type="Pfam" id="PF01218">
    <property type="entry name" value="Coprogen_oxidas"/>
    <property type="match status" value="1"/>
</dbReference>
<dbReference type="PIRSF" id="PIRSF000166">
    <property type="entry name" value="Coproporphyri_ox"/>
    <property type="match status" value="1"/>
</dbReference>
<dbReference type="PRINTS" id="PR00073">
    <property type="entry name" value="COPRGNOXDASE"/>
</dbReference>
<dbReference type="SUPFAM" id="SSF102886">
    <property type="entry name" value="Coproporphyrinogen III oxidase"/>
    <property type="match status" value="1"/>
</dbReference>
<dbReference type="PROSITE" id="PS01021">
    <property type="entry name" value="COPROGEN_OXIDASE"/>
    <property type="match status" value="1"/>
</dbReference>
<gene>
    <name evidence="1" type="primary">hemF</name>
    <name type="ordered locus">RL3494</name>
</gene>
<evidence type="ECO:0000255" key="1">
    <source>
        <dbReference type="HAMAP-Rule" id="MF_00333"/>
    </source>
</evidence>
<proteinExistence type="inferred from homology"/>
<accession>Q1MDJ5</accession>
<organism>
    <name type="scientific">Rhizobium johnstonii (strain DSM 114642 / LMG 32736 / 3841)</name>
    <name type="common">Rhizobium leguminosarum bv. viciae</name>
    <dbReference type="NCBI Taxonomy" id="216596"/>
    <lineage>
        <taxon>Bacteria</taxon>
        <taxon>Pseudomonadati</taxon>
        <taxon>Pseudomonadota</taxon>
        <taxon>Alphaproteobacteria</taxon>
        <taxon>Hyphomicrobiales</taxon>
        <taxon>Rhizobiaceae</taxon>
        <taxon>Rhizobium/Agrobacterium group</taxon>
        <taxon>Rhizobium</taxon>
        <taxon>Rhizobium johnstonii</taxon>
    </lineage>
</organism>
<feature type="chain" id="PRO_1000119815" description="Oxygen-dependent coproporphyrinogen-III oxidase">
    <location>
        <begin position="1"/>
        <end position="303"/>
    </location>
</feature>
<feature type="region of interest" description="Important for dimerization" evidence="1">
    <location>
        <begin position="268"/>
        <end position="303"/>
    </location>
</feature>
<feature type="active site" description="Proton donor" evidence="1">
    <location>
        <position position="131"/>
    </location>
</feature>
<feature type="binding site" evidence="1">
    <location>
        <position position="117"/>
    </location>
    <ligand>
        <name>substrate</name>
    </ligand>
</feature>
<feature type="binding site" evidence="1">
    <location>
        <position position="121"/>
    </location>
    <ligand>
        <name>a divalent metal cation</name>
        <dbReference type="ChEBI" id="CHEBI:60240"/>
    </ligand>
</feature>
<feature type="binding site" evidence="1">
    <location>
        <position position="131"/>
    </location>
    <ligand>
        <name>a divalent metal cation</name>
        <dbReference type="ChEBI" id="CHEBI:60240"/>
    </ligand>
</feature>
<feature type="binding site" evidence="1">
    <location>
        <begin position="133"/>
        <end position="135"/>
    </location>
    <ligand>
        <name>substrate</name>
    </ligand>
</feature>
<feature type="binding site" evidence="1">
    <location>
        <position position="169"/>
    </location>
    <ligand>
        <name>a divalent metal cation</name>
        <dbReference type="ChEBI" id="CHEBI:60240"/>
    </ligand>
</feature>
<feature type="binding site" evidence="1">
    <location>
        <position position="199"/>
    </location>
    <ligand>
        <name>a divalent metal cation</name>
        <dbReference type="ChEBI" id="CHEBI:60240"/>
    </ligand>
</feature>
<feature type="binding site" evidence="1">
    <location>
        <begin position="286"/>
        <end position="288"/>
    </location>
    <ligand>
        <name>substrate</name>
    </ligand>
</feature>
<feature type="site" description="Important for dimerization" evidence="1">
    <location>
        <position position="199"/>
    </location>
</feature>
<reference key="1">
    <citation type="journal article" date="2006" name="Genome Biol.">
        <title>The genome of Rhizobium leguminosarum has recognizable core and accessory components.</title>
        <authorList>
            <person name="Young J.P.W."/>
            <person name="Crossman L.C."/>
            <person name="Johnston A.W.B."/>
            <person name="Thomson N.R."/>
            <person name="Ghazoui Z.F."/>
            <person name="Hull K.H."/>
            <person name="Wexler M."/>
            <person name="Curson A.R.J."/>
            <person name="Todd J.D."/>
            <person name="Poole P.S."/>
            <person name="Mauchline T.H."/>
            <person name="East A.K."/>
            <person name="Quail M.A."/>
            <person name="Churcher C."/>
            <person name="Arrowsmith C."/>
            <person name="Cherevach I."/>
            <person name="Chillingworth T."/>
            <person name="Clarke K."/>
            <person name="Cronin A."/>
            <person name="Davis P."/>
            <person name="Fraser A."/>
            <person name="Hance Z."/>
            <person name="Hauser H."/>
            <person name="Jagels K."/>
            <person name="Moule S."/>
            <person name="Mungall K."/>
            <person name="Norbertczak H."/>
            <person name="Rabbinowitsch E."/>
            <person name="Sanders M."/>
            <person name="Simmonds M."/>
            <person name="Whitehead S."/>
            <person name="Parkhill J."/>
        </authorList>
    </citation>
    <scope>NUCLEOTIDE SEQUENCE [LARGE SCALE GENOMIC DNA]</scope>
    <source>
        <strain>DSM 114642 / LMG 32736 / 3841</strain>
    </source>
</reference>
<keyword id="KW-0963">Cytoplasm</keyword>
<keyword id="KW-0350">Heme biosynthesis</keyword>
<keyword id="KW-0479">Metal-binding</keyword>
<keyword id="KW-0560">Oxidoreductase</keyword>
<keyword id="KW-0627">Porphyrin biosynthesis</keyword>